<organism>
    <name type="scientific">Symbiobacterium thermophilum (strain DSM 24528 / JCM 14929 / IAM 14863 / T)</name>
    <dbReference type="NCBI Taxonomy" id="292459"/>
    <lineage>
        <taxon>Bacteria</taxon>
        <taxon>Bacillati</taxon>
        <taxon>Bacillota</taxon>
        <taxon>Clostridia</taxon>
        <taxon>Eubacteriales</taxon>
        <taxon>Symbiobacteriaceae</taxon>
        <taxon>Symbiobacterium</taxon>
    </lineage>
</organism>
<reference key="1">
    <citation type="journal article" date="2004" name="Nucleic Acids Res.">
        <title>Genome sequence of Symbiobacterium thermophilum, an uncultivable bacterium that depends on microbial commensalism.</title>
        <authorList>
            <person name="Ueda K."/>
            <person name="Yamashita A."/>
            <person name="Ishikawa J."/>
            <person name="Shimada M."/>
            <person name="Watsuji T."/>
            <person name="Morimura K."/>
            <person name="Ikeda H."/>
            <person name="Hattori M."/>
            <person name="Beppu T."/>
        </authorList>
    </citation>
    <scope>NUCLEOTIDE SEQUENCE [LARGE SCALE GENOMIC DNA]</scope>
    <source>
        <strain>DSM 24528 / JCM 14929 / IAM 14863 / T</strain>
    </source>
</reference>
<keyword id="KW-1185">Reference proteome</keyword>
<keyword id="KW-0687">Ribonucleoprotein</keyword>
<keyword id="KW-0689">Ribosomal protein</keyword>
<keyword id="KW-0694">RNA-binding</keyword>
<keyword id="KW-0699">rRNA-binding</keyword>
<dbReference type="EMBL" id="AP006840">
    <property type="protein sequence ID" value="BAD42056.1"/>
    <property type="molecule type" value="Genomic_DNA"/>
</dbReference>
<dbReference type="RefSeq" id="WP_011197189.1">
    <property type="nucleotide sequence ID" value="NC_006177.1"/>
</dbReference>
<dbReference type="SMR" id="Q67JU4"/>
<dbReference type="STRING" id="292459.STH3074"/>
<dbReference type="KEGG" id="sth:STH3074"/>
<dbReference type="eggNOG" id="COG0088">
    <property type="taxonomic scope" value="Bacteria"/>
</dbReference>
<dbReference type="HOGENOM" id="CLU_041575_5_2_9"/>
<dbReference type="OrthoDB" id="9803201at2"/>
<dbReference type="Proteomes" id="UP000000417">
    <property type="component" value="Chromosome"/>
</dbReference>
<dbReference type="GO" id="GO:1990904">
    <property type="term" value="C:ribonucleoprotein complex"/>
    <property type="evidence" value="ECO:0007669"/>
    <property type="project" value="UniProtKB-KW"/>
</dbReference>
<dbReference type="GO" id="GO:0005840">
    <property type="term" value="C:ribosome"/>
    <property type="evidence" value="ECO:0007669"/>
    <property type="project" value="UniProtKB-KW"/>
</dbReference>
<dbReference type="GO" id="GO:0019843">
    <property type="term" value="F:rRNA binding"/>
    <property type="evidence" value="ECO:0007669"/>
    <property type="project" value="UniProtKB-UniRule"/>
</dbReference>
<dbReference type="GO" id="GO:0003735">
    <property type="term" value="F:structural constituent of ribosome"/>
    <property type="evidence" value="ECO:0007669"/>
    <property type="project" value="InterPro"/>
</dbReference>
<dbReference type="GO" id="GO:0006412">
    <property type="term" value="P:translation"/>
    <property type="evidence" value="ECO:0007669"/>
    <property type="project" value="UniProtKB-UniRule"/>
</dbReference>
<dbReference type="Gene3D" id="3.40.1370.10">
    <property type="match status" value="1"/>
</dbReference>
<dbReference type="HAMAP" id="MF_01328_B">
    <property type="entry name" value="Ribosomal_uL4_B"/>
    <property type="match status" value="1"/>
</dbReference>
<dbReference type="InterPro" id="IPR002136">
    <property type="entry name" value="Ribosomal_uL4"/>
</dbReference>
<dbReference type="InterPro" id="IPR013005">
    <property type="entry name" value="Ribosomal_uL4-like"/>
</dbReference>
<dbReference type="InterPro" id="IPR023574">
    <property type="entry name" value="Ribosomal_uL4_dom_sf"/>
</dbReference>
<dbReference type="NCBIfam" id="TIGR03953">
    <property type="entry name" value="rplD_bact"/>
    <property type="match status" value="1"/>
</dbReference>
<dbReference type="PANTHER" id="PTHR10746">
    <property type="entry name" value="50S RIBOSOMAL PROTEIN L4"/>
    <property type="match status" value="1"/>
</dbReference>
<dbReference type="PANTHER" id="PTHR10746:SF6">
    <property type="entry name" value="LARGE RIBOSOMAL SUBUNIT PROTEIN UL4M"/>
    <property type="match status" value="1"/>
</dbReference>
<dbReference type="Pfam" id="PF00573">
    <property type="entry name" value="Ribosomal_L4"/>
    <property type="match status" value="1"/>
</dbReference>
<dbReference type="SUPFAM" id="SSF52166">
    <property type="entry name" value="Ribosomal protein L4"/>
    <property type="match status" value="1"/>
</dbReference>
<accession>Q67JU4</accession>
<evidence type="ECO:0000255" key="1">
    <source>
        <dbReference type="HAMAP-Rule" id="MF_01328"/>
    </source>
</evidence>
<evidence type="ECO:0000256" key="2">
    <source>
        <dbReference type="SAM" id="MobiDB-lite"/>
    </source>
</evidence>
<evidence type="ECO:0000305" key="3"/>
<comment type="function">
    <text evidence="1">One of the primary rRNA binding proteins, this protein initially binds near the 5'-end of the 23S rRNA. It is important during the early stages of 50S assembly. It makes multiple contacts with different domains of the 23S rRNA in the assembled 50S subunit and ribosome.</text>
</comment>
<comment type="function">
    <text evidence="1">Forms part of the polypeptide exit tunnel.</text>
</comment>
<comment type="subunit">
    <text evidence="1">Part of the 50S ribosomal subunit.</text>
</comment>
<comment type="similarity">
    <text evidence="1">Belongs to the universal ribosomal protein uL4 family.</text>
</comment>
<proteinExistence type="inferred from homology"/>
<protein>
    <recommendedName>
        <fullName evidence="1">Large ribosomal subunit protein uL4</fullName>
    </recommendedName>
    <alternativeName>
        <fullName evidence="3">50S ribosomal protein L4</fullName>
    </alternativeName>
</protein>
<name>RL4_SYMTH</name>
<feature type="chain" id="PRO_0000242447" description="Large ribosomal subunit protein uL4">
    <location>
        <begin position="1"/>
        <end position="207"/>
    </location>
</feature>
<feature type="region of interest" description="Disordered" evidence="2">
    <location>
        <begin position="47"/>
        <end position="77"/>
    </location>
</feature>
<feature type="compositionally biased region" description="Basic residues" evidence="2">
    <location>
        <begin position="63"/>
        <end position="77"/>
    </location>
</feature>
<sequence length="207" mass="22519">MPKVAVYNKEGATVGEITLSDAVFGAEVNPGLLHEVVQMYLANKRQGTADTKTRAEVSGGGRKPWRQKGTGRARHGSIRSPLWRKGGIVFGPHPREYGWSMPKKARRAALRQALSAKVKSGELIVVDKFELEAPKTREVATLLKNLKVDGSAFIVTAQEDVNIYKSARNIPGVRVNAARNLNAYDVLAASKLVFTQDAVAKVEEVLG</sequence>
<gene>
    <name evidence="1" type="primary">rplD</name>
    <name type="ordered locus">STH3074</name>
</gene>